<gene>
    <name evidence="1" type="primary">wecG</name>
    <name evidence="1" type="synonym">rffM</name>
    <name type="ordered locus">E2348C_4096</name>
</gene>
<sequence>MNNNTTAPTYTLRGLQLIGWRDMQHALDYLFADGQLKQGTLVAINAEKILTIEDNAEVRELINAAEFKYADGISVVRSVRKKYPQAQVSRVAGADLWEELMARAGKEGTPVFLVGGKPEVLAQTEAKLRNQWNVNIVGSQDGYFKPEQRQALFERIHASGAQIVTVAMGSPKQEIFMRDCRLVHPDALYMGVGGTYDVFTGHVKRAPKIWQTLGLEWLYRLLSQPSRIKRQLRLLRYLRWHYTGNL</sequence>
<name>WECG_ECO27</name>
<feature type="chain" id="PRO_1000148779" description="UDP-N-acetyl-D-mannosaminuronic acid transferase">
    <location>
        <begin position="1"/>
        <end position="246"/>
    </location>
</feature>
<reference key="1">
    <citation type="journal article" date="2009" name="J. Bacteriol.">
        <title>Complete genome sequence and comparative genome analysis of enteropathogenic Escherichia coli O127:H6 strain E2348/69.</title>
        <authorList>
            <person name="Iguchi A."/>
            <person name="Thomson N.R."/>
            <person name="Ogura Y."/>
            <person name="Saunders D."/>
            <person name="Ooka T."/>
            <person name="Henderson I.R."/>
            <person name="Harris D."/>
            <person name="Asadulghani M."/>
            <person name="Kurokawa K."/>
            <person name="Dean P."/>
            <person name="Kenny B."/>
            <person name="Quail M.A."/>
            <person name="Thurston S."/>
            <person name="Dougan G."/>
            <person name="Hayashi T."/>
            <person name="Parkhill J."/>
            <person name="Frankel G."/>
        </authorList>
    </citation>
    <scope>NUCLEOTIDE SEQUENCE [LARGE SCALE GENOMIC DNA]</scope>
    <source>
        <strain>E2348/69 / EPEC</strain>
    </source>
</reference>
<accession>B7UNB3</accession>
<proteinExistence type="inferred from homology"/>
<organism>
    <name type="scientific">Escherichia coli O127:H6 (strain E2348/69 / EPEC)</name>
    <dbReference type="NCBI Taxonomy" id="574521"/>
    <lineage>
        <taxon>Bacteria</taxon>
        <taxon>Pseudomonadati</taxon>
        <taxon>Pseudomonadota</taxon>
        <taxon>Gammaproteobacteria</taxon>
        <taxon>Enterobacterales</taxon>
        <taxon>Enterobacteriaceae</taxon>
        <taxon>Escherichia</taxon>
    </lineage>
</organism>
<dbReference type="EC" id="2.4.1.180" evidence="1"/>
<dbReference type="EMBL" id="FM180568">
    <property type="protein sequence ID" value="CAS11644.1"/>
    <property type="molecule type" value="Genomic_DNA"/>
</dbReference>
<dbReference type="RefSeq" id="WP_001064027.1">
    <property type="nucleotide sequence ID" value="NC_011601.1"/>
</dbReference>
<dbReference type="SMR" id="B7UNB3"/>
<dbReference type="CAZy" id="GT26">
    <property type="family name" value="Glycosyltransferase Family 26"/>
</dbReference>
<dbReference type="KEGG" id="ecg:E2348C_4096"/>
<dbReference type="HOGENOM" id="CLU_063203_3_2_6"/>
<dbReference type="UniPathway" id="UPA00566"/>
<dbReference type="Proteomes" id="UP000008205">
    <property type="component" value="Chromosome"/>
</dbReference>
<dbReference type="GO" id="GO:0047241">
    <property type="term" value="F:lipopolysaccharide N-acetylmannosaminouronosyltransferase activity"/>
    <property type="evidence" value="ECO:0007669"/>
    <property type="project" value="UniProtKB-UniRule"/>
</dbReference>
<dbReference type="GO" id="GO:0009246">
    <property type="term" value="P:enterobacterial common antigen biosynthetic process"/>
    <property type="evidence" value="ECO:0007669"/>
    <property type="project" value="UniProtKB-UniRule"/>
</dbReference>
<dbReference type="CDD" id="cd06533">
    <property type="entry name" value="Glyco_transf_WecG_TagA"/>
    <property type="match status" value="1"/>
</dbReference>
<dbReference type="HAMAP" id="MF_01001">
    <property type="entry name" value="WecG_RffM"/>
    <property type="match status" value="1"/>
</dbReference>
<dbReference type="InterPro" id="IPR023085">
    <property type="entry name" value="UDP-ManNAcA_Trfase_WecG"/>
</dbReference>
<dbReference type="InterPro" id="IPR004629">
    <property type="entry name" value="WecG_TagA_CpsF"/>
</dbReference>
<dbReference type="NCBIfam" id="NF002980">
    <property type="entry name" value="PRK03692.1"/>
    <property type="match status" value="1"/>
</dbReference>
<dbReference type="NCBIfam" id="TIGR00696">
    <property type="entry name" value="wecG_tagA_cpsF"/>
    <property type="match status" value="1"/>
</dbReference>
<dbReference type="PANTHER" id="PTHR34136">
    <property type="match status" value="1"/>
</dbReference>
<dbReference type="PANTHER" id="PTHR34136:SF1">
    <property type="entry name" value="UDP-N-ACETYL-D-MANNOSAMINURONIC ACID TRANSFERASE"/>
    <property type="match status" value="1"/>
</dbReference>
<dbReference type="Pfam" id="PF03808">
    <property type="entry name" value="Glyco_tran_WecG"/>
    <property type="match status" value="1"/>
</dbReference>
<evidence type="ECO:0000255" key="1">
    <source>
        <dbReference type="HAMAP-Rule" id="MF_01001"/>
    </source>
</evidence>
<keyword id="KW-0328">Glycosyltransferase</keyword>
<keyword id="KW-1185">Reference proteome</keyword>
<keyword id="KW-0808">Transferase</keyword>
<comment type="function">
    <text evidence="1">Catalyzes the synthesis of Und-PP-GlcNAc-ManNAcA (Lipid II), the second lipid-linked intermediate involved in enterobacterial common antigen (ECA) synthesis.</text>
</comment>
<comment type="catalytic activity">
    <reaction evidence="1">
        <text>UDP-N-acetyl-alpha-D-mannosaminouronate + N-acetyl-alpha-D-glucosaminyl-di-trans,octa-cis-undecaprenyl diphosphate = beta-D-ManNAcA-(1-&gt;4)-alpha-D-GlcNAc-di-trans,octa-cis-undecaprenyl diphosphate + UDP + H(+)</text>
        <dbReference type="Rhea" id="RHEA:28366"/>
        <dbReference type="ChEBI" id="CHEBI:15378"/>
        <dbReference type="ChEBI" id="CHEBI:58223"/>
        <dbReference type="ChEBI" id="CHEBI:61495"/>
        <dbReference type="ChEBI" id="CHEBI:62959"/>
        <dbReference type="ChEBI" id="CHEBI:70731"/>
        <dbReference type="EC" id="2.4.1.180"/>
    </reaction>
</comment>
<comment type="pathway">
    <text evidence="1">Bacterial outer membrane biogenesis; enterobacterial common antigen biosynthesis.</text>
</comment>
<comment type="similarity">
    <text evidence="1">Belongs to the glycosyltransferase 26 family.</text>
</comment>
<protein>
    <recommendedName>
        <fullName evidence="1">UDP-N-acetyl-D-mannosaminuronic acid transferase</fullName>
        <shortName evidence="1">UDP-ManNAcA transferase</shortName>
        <ecNumber evidence="1">2.4.1.180</ecNumber>
    </recommendedName>
</protein>